<keyword id="KW-0002">3D-structure</keyword>
<keyword id="KW-0025">Alternative splicing</keyword>
<keyword id="KW-0963">Cytoplasm</keyword>
<keyword id="KW-0488">Methylation</keyword>
<keyword id="KW-0597">Phosphoprotein</keyword>
<keyword id="KW-1185">Reference proteome</keyword>
<keyword id="KW-0677">Repeat</keyword>
<keyword id="KW-0694">RNA-binding</keyword>
<keyword id="KW-0810">Translation regulation</keyword>
<sequence length="1066" mass="114314">MNHDFQALALESRGMGELLPTKKFWEPDDSTKDGQKGIFLGDDEWRETAWGTSHHSMSQPIMVQRRSGQSFHGNSEVNAILSPRSESGGLGVSMVEYVLSSSPADKLDSRFRKGTFGTRDAETDGPEKGDQKGKASPFEEDQNRDLKQDDEDSKINGRGLPNGMDADCKDFNRTPGSRQASPTEVVERLGPSTNPPEGLGPLPNPTANKPLVEEFSNPETQNLDAMDQVGLDSLQFDYPGNQVPMDSSGATVGLFDYNSQQQLFQRTSALTVQQLTAAQQQQYALAAAQQPHIAGVFSAGLAPAAFVPNPYIISAAPPGTDPYTAAGLAAAATLAGPAVVPPQYYGVPWGVYPANLFQQQAAAAASNTANQQAASQAQPGQQQVLRPGAGQRPITPSQGQQGQQAESLAAAANPTLAFGQSLAAGMPGYQVLAPTAYYDQTGALVVGPGARTGLGAPVRLMAPTPVLISSTAAQAAAAAAAAGGTANSLTGSTNGLFRPIGTQPPQQQQQQQQPSTNLQSNSFYGSSSLTNSSQSSSLFSHGPGQPGSASLGFGSGSSLGAAIGSALSGFGSSVGSSASSSATRRESLSTSSDLYKRSSSSLAPIGQPFYNSLGFSSSPSPIGMPLPSQTPGHSLTPPPSLSSHGSSSSLHLGGLTNGSGRYISAAPGAEAKYRSASSTSSLFSSSSQLFPPSRLRYNRSDIMPSGRSRLLEDFRNNRFPNLQLRDLIGHIVEFSQDQHGSRFIQQKLERATPAERQIVFNEILQAAYQLMTDVFGNYVIQKFFEFGSLDQKLALATRIRGHVLPLALQMYGCRVIQKALESISSDQQVISEMVKELDGHVLKCVKDQNGNHVVQKCIECVQPQSLQFIIDAFKGQVFVLSTHPYGCRVIQRILEHCTAEQTLPILEELHQHTEQLVQDQYGNYVIQHVLEHGRPEDKSKIVSEIRGKVLALSQHKFASNVVEKCVTHASRAERALLIDEVCCQNDGPHSALYTMMKDQYANYVVQKMIDMAEPAQRKIIMHKIRPHITTLRKYTYGKHILAKLEKYYLKNSPDLGPIGGPPNGML</sequence>
<name>PUM2_MOUSE</name>
<accession>Q80U58</accession>
<accession>Q80UZ9</accession>
<accession>Q91YW4</accession>
<accession>Q925A0</accession>
<accession>Q9ERC7</accession>
<proteinExistence type="evidence at protein level"/>
<reference key="1">
    <citation type="journal article" date="2001" name="RNA">
        <title>PUM2, a novel murine puf protein, and its consensus RNA-binding site.</title>
        <authorList>
            <person name="White E.K."/>
            <person name="Moore-Jarrett T."/>
            <person name="Ruley H.E."/>
        </authorList>
    </citation>
    <scope>NUCLEOTIDE SEQUENCE [MRNA] (ISOFORM 1)</scope>
    <scope>RNA-BINDING</scope>
    <scope>TISSUE SPECIFICITY</scope>
    <source>
        <strain>C57BL/6J</strain>
    </source>
</reference>
<reference key="2">
    <citation type="journal article" date="2003" name="Blood Cells Mol. Dis.">
        <title>Mouse Pum1 and Pum2 genes, members of the Pumilio family of RNA-binding proteins, show differential expression in fetal and adult hematopoietic stem cells and progenitors.</title>
        <authorList>
            <person name="Spassov D.S."/>
            <person name="Jurecic R."/>
        </authorList>
    </citation>
    <scope>NUCLEOTIDE SEQUENCE [MRNA] (ISOFORM 1)</scope>
    <scope>TISSUE SPECIFICITY</scope>
    <source>
        <strain>C57BL/6J</strain>
    </source>
</reference>
<reference key="3">
    <citation type="journal article" date="2003" name="DNA Res.">
        <title>Prediction of the coding sequences of mouse homologues of KIAA gene: II. The complete nucleotide sequences of 400 mouse KIAA-homologous cDNAs identified by screening of terminal sequences of cDNA clones randomly sampled from size-fractionated libraries.</title>
        <authorList>
            <person name="Okazaki N."/>
            <person name="Kikuno R."/>
            <person name="Ohara R."/>
            <person name="Inamoto S."/>
            <person name="Aizawa H."/>
            <person name="Yuasa S."/>
            <person name="Nakajima D."/>
            <person name="Nagase T."/>
            <person name="Ohara O."/>
            <person name="Koga H."/>
        </authorList>
    </citation>
    <scope>NUCLEOTIDE SEQUENCE [LARGE SCALE MRNA] (ISOFORM 3)</scope>
    <source>
        <tissue>Brain</tissue>
    </source>
</reference>
<reference key="4">
    <citation type="journal article" date="2004" name="Genome Res.">
        <title>The status, quality, and expansion of the NIH full-length cDNA project: the Mammalian Gene Collection (MGC).</title>
        <authorList>
            <consortium name="The MGC Project Team"/>
        </authorList>
    </citation>
    <scope>NUCLEOTIDE SEQUENCE [LARGE SCALE MRNA] (ISOFORM 2)</scope>
    <source>
        <strain>C57BL/6J</strain>
        <tissue>Mammary tumor</tissue>
    </source>
</reference>
<reference key="5">
    <citation type="journal article" date="2008" name="Dev. Biol.">
        <title>Potential role of Nanos3 in maintaining the undifferentiated spermatogonia population.</title>
        <authorList>
            <person name="Lolicato F."/>
            <person name="Marino R."/>
            <person name="Paronetto M.P."/>
            <person name="Pellegrini M."/>
            <person name="Dolci S."/>
            <person name="Geremia R."/>
            <person name="Grimaldi P."/>
        </authorList>
    </citation>
    <scope>INTERACTION WITH NANOS3</scope>
    <scope>TISSUE SPECIFICITY</scope>
</reference>
<reference key="6">
    <citation type="journal article" date="2009" name="Immunity">
        <title>The phagosomal proteome in interferon-gamma-activated macrophages.</title>
        <authorList>
            <person name="Trost M."/>
            <person name="English L."/>
            <person name="Lemieux S."/>
            <person name="Courcelles M."/>
            <person name="Desjardins M."/>
            <person name="Thibault P."/>
        </authorList>
    </citation>
    <scope>PHOSPHORYLATION [LARGE SCALE ANALYSIS] AT SER-136</scope>
    <scope>IDENTIFICATION BY MASS SPECTROMETRY [LARGE SCALE ANALYSIS]</scope>
</reference>
<reference key="7">
    <citation type="journal article" date="2010" name="Cell">
        <title>A tissue-specific atlas of mouse protein phosphorylation and expression.</title>
        <authorList>
            <person name="Huttlin E.L."/>
            <person name="Jedrychowski M.P."/>
            <person name="Elias J.E."/>
            <person name="Goswami T."/>
            <person name="Rad R."/>
            <person name="Beausoleil S.A."/>
            <person name="Villen J."/>
            <person name="Haas W."/>
            <person name="Sowa M.E."/>
            <person name="Gygi S.P."/>
        </authorList>
    </citation>
    <scope>PHOSPHORYLATION [LARGE SCALE ANALYSIS] AT SER-82; SER-136 AND SER-587</scope>
    <scope>IDENTIFICATION BY MASS SPECTROMETRY [LARGE SCALE ANALYSIS]</scope>
    <source>
        <tissue>Brain</tissue>
        <tissue>Heart</tissue>
        <tissue>Kidney</tissue>
        <tissue>Lung</tissue>
        <tissue>Spleen</tissue>
        <tissue>Testis</tissue>
    </source>
</reference>
<reference key="8">
    <citation type="journal article" date="2010" name="Reproduction">
        <title>Functional reconstruction of NANOS3 expression in the germ cell lineage by a novel transgenic reporter reveals distinct subcellular localizations of NANOS3.</title>
        <authorList>
            <person name="Yamaji M."/>
            <person name="Tanaka T."/>
            <person name="Shigeta M."/>
            <person name="Chuma S."/>
            <person name="Saga Y."/>
            <person name="Saitou M."/>
        </authorList>
    </citation>
    <scope>SUBCELLULAR LOCATION</scope>
</reference>
<reference key="9">
    <citation type="journal article" date="2009" name="J. Struct. Biol.">
        <title>Structure and RNA binding of the mouse Pumilio-2 Puf domain.</title>
        <authorList>
            <person name="Jenkins H.T."/>
            <person name="Baker-Wilding R."/>
            <person name="Edwards T.A."/>
        </authorList>
    </citation>
    <scope>X-RAY CRYSTALLOGRAPHY (1.6 ANGSTROMS) OF 706-1056</scope>
</reference>
<comment type="function">
    <text evidence="3">Sequence-specific RNA-binding protein that acts as a post-transcriptional repressor by binding the 3'-UTR of mRNA targets. Binds to an RNA consensus sequence, the Pumilio Response Element (PRE), 5'-UGUANAUA-3', that is related to the Nanos Response Element (NRE). Mediates post-transcriptional repression of transcripts via different mechanisms: acts via direct recruitment of the CCR4-POP2-NOT deadenylase leading to translational inhibition and mRNA degradation. Also mediates deadenylation-independent repression by promoting accessibility of miRNAs. Acts as a post-transcriptional repressor of E2F3 mRNAs by binding to its 3'-UTR and facilitating miRNA regulation. Plays a role in cytoplasmic sensing of viral infection. Represses a program of genes necessary to maintain genomic stability such as key mitotic, DNA repair and DNA replication factors. Its ability to repress those target mRNAs is regulated by the lncRNA NORAD (non-coding RNA activated by DNA damage) which, due to its high abundance and multitude of PUMILIO binding sites, is able to sequester a significant fraction of PUM1 and PUM2 in the cytoplasm. May regulate DCUN1D3 mRNA levels. May support proliferation and self-renewal of stem cells. Binds specifically to miRNA MIR199A precursor, with PUM1, regulates miRNA MIR199A expression at a postranscriptional level (By similarity).</text>
</comment>
<comment type="subunit">
    <text evidence="3">Homodimer; homodimerizes in vitro. Interacts with DAZ1, DAZL and NANOS1 via its pumilio repeats. Interacts with NANOS3 (By similarity). Interacts with SNAPIN. Recruits the CCR4-POP2-NOT deadenylase leading to translational inhibition and mRNA degradation. Interacts with DDX20. In case of viral infection, interacts with DHX58 (By similarity).</text>
</comment>
<comment type="subcellular location">
    <subcellularLocation>
        <location evidence="14">Cytoplasm</location>
    </subcellularLocation>
    <subcellularLocation>
        <location evidence="10">Cytoplasmic granule</location>
    </subcellularLocation>
    <subcellularLocation>
        <location evidence="1">Cytoplasm</location>
        <location evidence="1">Perinuclear region</location>
    </subcellularLocation>
    <text evidence="3 10">The cytoplasmic granules are stress granules which are a dense aggregation in the cytosol composed of proteins and RNAs that appear when the cell is under stress. Colocalizes with NANOS1 and SNAPIN in the perinuclear region of germ cells (By similarity). Colocalizes with NANOS3 in the stress granules (PubMed:19861488).</text>
</comment>
<comment type="alternative products">
    <event type="alternative splicing"/>
    <isoform>
        <id>Q80U58-1</id>
        <name>1</name>
        <sequence type="displayed"/>
    </isoform>
    <isoform>
        <id>Q80U58-2</id>
        <name>2</name>
        <sequence type="described" ref="VSP_009322 VSP_009323"/>
    </isoform>
    <isoform>
        <id>Q80U58-3</id>
        <name>3</name>
        <sequence type="described" ref="VSP_009321 VSP_009322 VSP_009323"/>
    </isoform>
</comment>
<comment type="tissue specificity">
    <text evidence="6 7 8">Widely expressed. Expressed in embryonic stem cells, heart, kidney, lung, skin, intestine, spleen and thymus. Expressed at intermediate level in brain and liver. Weakly or not expressed in muscles and stomach. Expressed at various stages of myeloid and lymphoid cell development. In the testis expressed in the spermatogoni, spermatocytes, spermatids and Sertoli cells.</text>
</comment>
<comment type="domain">
    <text evidence="2 9">The pumilio repeats mediate the association with RNA by packing together to form a right-handed superhelix that approximates a half donut. RNA-binding occurs on the concave side of the surface (PubMed:19540345). PUM2 is composed of 8 pumilio repeats of 36 residues; each repeat binds a single nucleotide in its RNA target. Residues at positions 12 and 16 of the pumilio repeat bind each RNA base via hydrogen bonding or van der Waals contacts with the Watson-Crick edge, while the amino acid at position 13 makes a stacking interaction. The recognition of RNA by pumilio repeats is base specific: cysteine and glutamine at position 12 and 16, respectively, bind adenine; asparagine and glutamine bind uracil; and serine and glutamate bind guanine (By similarity).</text>
</comment>
<comment type="sequence caution" evidence="13">
    <conflict type="erroneous initiation">
        <sequence resource="EMBL-CDS" id="BAC65507"/>
    </conflict>
    <text>Extended N-terminus.</text>
</comment>
<evidence type="ECO:0000250" key="1"/>
<evidence type="ECO:0000250" key="2">
    <source>
        <dbReference type="UniProtKB" id="Q14671"/>
    </source>
</evidence>
<evidence type="ECO:0000250" key="3">
    <source>
        <dbReference type="UniProtKB" id="Q8TB72"/>
    </source>
</evidence>
<evidence type="ECO:0000255" key="4">
    <source>
        <dbReference type="PROSITE-ProRule" id="PRU00318"/>
    </source>
</evidence>
<evidence type="ECO:0000256" key="5">
    <source>
        <dbReference type="SAM" id="MobiDB-lite"/>
    </source>
</evidence>
<evidence type="ECO:0000269" key="6">
    <source>
    </source>
</evidence>
<evidence type="ECO:0000269" key="7">
    <source>
    </source>
</evidence>
<evidence type="ECO:0000269" key="8">
    <source>
    </source>
</evidence>
<evidence type="ECO:0000269" key="9">
    <source>
    </source>
</evidence>
<evidence type="ECO:0000269" key="10">
    <source>
    </source>
</evidence>
<evidence type="ECO:0000303" key="11">
    <source>
    </source>
</evidence>
<evidence type="ECO:0000303" key="12">
    <source>
    </source>
</evidence>
<evidence type="ECO:0000305" key="13"/>
<evidence type="ECO:0000305" key="14">
    <source>
    </source>
</evidence>
<evidence type="ECO:0007744" key="15">
    <source>
    </source>
</evidence>
<evidence type="ECO:0007744" key="16">
    <source>
    </source>
</evidence>
<evidence type="ECO:0007829" key="17">
    <source>
        <dbReference type="PDB" id="3GVO"/>
    </source>
</evidence>
<evidence type="ECO:0007829" key="18">
    <source>
        <dbReference type="PDB" id="3GVT"/>
    </source>
</evidence>
<organism>
    <name type="scientific">Mus musculus</name>
    <name type="common">Mouse</name>
    <dbReference type="NCBI Taxonomy" id="10090"/>
    <lineage>
        <taxon>Eukaryota</taxon>
        <taxon>Metazoa</taxon>
        <taxon>Chordata</taxon>
        <taxon>Craniata</taxon>
        <taxon>Vertebrata</taxon>
        <taxon>Euteleostomi</taxon>
        <taxon>Mammalia</taxon>
        <taxon>Eutheria</taxon>
        <taxon>Euarchontoglires</taxon>
        <taxon>Glires</taxon>
        <taxon>Rodentia</taxon>
        <taxon>Myomorpha</taxon>
        <taxon>Muroidea</taxon>
        <taxon>Muridae</taxon>
        <taxon>Murinae</taxon>
        <taxon>Mus</taxon>
        <taxon>Mus</taxon>
    </lineage>
</organism>
<gene>
    <name type="primary">Pum2</name>
    <name type="synonym">Kiaa0235</name>
</gene>
<feature type="chain" id="PRO_0000075920" description="Pumilio homolog 2">
    <location>
        <begin position="1"/>
        <end position="1066"/>
    </location>
</feature>
<feature type="domain" description="PUM-HD" evidence="4">
    <location>
        <begin position="706"/>
        <end position="1048"/>
    </location>
</feature>
<feature type="repeat" description="Pumilio 1">
    <location>
        <begin position="726"/>
        <end position="761"/>
    </location>
</feature>
<feature type="repeat" description="Pumilio 2">
    <location>
        <begin position="762"/>
        <end position="797"/>
    </location>
</feature>
<feature type="repeat" description="Pumilio 3">
    <location>
        <begin position="798"/>
        <end position="835"/>
    </location>
</feature>
<feature type="repeat" description="Pumilio 4">
    <location>
        <begin position="836"/>
        <end position="871"/>
    </location>
</feature>
<feature type="repeat" description="Pumilio 5">
    <location>
        <begin position="872"/>
        <end position="907"/>
    </location>
</feature>
<feature type="repeat" description="Pumilio 6">
    <location>
        <begin position="908"/>
        <end position="943"/>
    </location>
</feature>
<feature type="repeat" description="Pumilio 7">
    <location>
        <begin position="944"/>
        <end position="979"/>
    </location>
</feature>
<feature type="repeat" description="Pumilio 8">
    <location>
        <begin position="980"/>
        <end position="1022"/>
    </location>
</feature>
<feature type="region of interest" description="Interaction with SNAPIN" evidence="1">
    <location>
        <begin position="1"/>
        <end position="260"/>
    </location>
</feature>
<feature type="region of interest" description="Disordered" evidence="5">
    <location>
        <begin position="106"/>
        <end position="203"/>
    </location>
</feature>
<feature type="region of interest" description="Disordered" evidence="5">
    <location>
        <begin position="368"/>
        <end position="408"/>
    </location>
</feature>
<feature type="region of interest" description="Disordered" evidence="5">
    <location>
        <begin position="490"/>
        <end position="551"/>
    </location>
</feature>
<feature type="region of interest" description="Disordered" evidence="5">
    <location>
        <begin position="620"/>
        <end position="650"/>
    </location>
</feature>
<feature type="region of interest" description="Adenine-nucleotide binding in RNA target" evidence="2">
    <location>
        <begin position="741"/>
        <end position="745"/>
    </location>
</feature>
<feature type="region of interest" description="Uracil-nucleotide binding in RNA target" evidence="2">
    <location>
        <begin position="777"/>
        <end position="781"/>
    </location>
</feature>
<feature type="region of interest" description="Adenine-nucleotide binding in RNA target" evidence="2">
    <location>
        <begin position="813"/>
        <end position="817"/>
    </location>
</feature>
<feature type="region of interest" description="Non-specific-nucleotide binding in RNA target" evidence="2">
    <location>
        <begin position="851"/>
        <end position="855"/>
    </location>
</feature>
<feature type="region of interest" description="Adenine-nucleotide binding in RNA target" evidence="2">
    <location>
        <begin position="887"/>
        <end position="891"/>
    </location>
</feature>
<feature type="region of interest" description="Uracil-nucleotide binding in RNA target" evidence="2">
    <location>
        <begin position="923"/>
        <end position="927"/>
    </location>
</feature>
<feature type="region of interest" description="Guanine-nucleotide binding in RNA target" evidence="2">
    <location>
        <begin position="959"/>
        <end position="963"/>
    </location>
</feature>
<feature type="region of interest" description="Uracil-nucleotide binding in RNA target" evidence="2">
    <location>
        <begin position="1002"/>
        <end position="1006"/>
    </location>
</feature>
<feature type="compositionally biased region" description="Basic and acidic residues" evidence="5">
    <location>
        <begin position="119"/>
        <end position="133"/>
    </location>
</feature>
<feature type="compositionally biased region" description="Low complexity" evidence="5">
    <location>
        <begin position="368"/>
        <end position="383"/>
    </location>
</feature>
<feature type="compositionally biased region" description="Polar residues" evidence="5">
    <location>
        <begin position="394"/>
        <end position="406"/>
    </location>
</feature>
<feature type="compositionally biased region" description="Low complexity" evidence="5">
    <location>
        <begin position="503"/>
        <end position="514"/>
    </location>
</feature>
<feature type="compositionally biased region" description="Polar residues" evidence="5">
    <location>
        <begin position="515"/>
        <end position="525"/>
    </location>
</feature>
<feature type="compositionally biased region" description="Low complexity" evidence="5">
    <location>
        <begin position="526"/>
        <end position="540"/>
    </location>
</feature>
<feature type="compositionally biased region" description="Low complexity" evidence="5">
    <location>
        <begin position="630"/>
        <end position="650"/>
    </location>
</feature>
<feature type="modified residue" description="Phosphoserine" evidence="3">
    <location>
        <position position="67"/>
    </location>
</feature>
<feature type="modified residue" description="Phosphoserine" evidence="2">
    <location>
        <position position="70"/>
    </location>
</feature>
<feature type="modified residue" description="Phosphoserine" evidence="16">
    <location>
        <position position="82"/>
    </location>
</feature>
<feature type="modified residue" description="Phosphoserine" evidence="2">
    <location>
        <position position="102"/>
    </location>
</feature>
<feature type="modified residue" description="Phosphoserine" evidence="15 16">
    <location>
        <position position="136"/>
    </location>
</feature>
<feature type="modified residue" description="Phosphoserine" evidence="3">
    <location>
        <position position="177"/>
    </location>
</feature>
<feature type="modified residue" description="Phosphoserine" evidence="3">
    <location>
        <position position="181"/>
    </location>
</feature>
<feature type="modified residue" description="Phosphothreonine" evidence="3">
    <location>
        <position position="183"/>
    </location>
</feature>
<feature type="modified residue" description="Phosphothreonine" evidence="3">
    <location>
        <position position="395"/>
    </location>
</feature>
<feature type="modified residue" description="Phosphoserine" evidence="16">
    <location>
        <position position="587"/>
    </location>
</feature>
<feature type="modified residue" description="Phosphoserine" evidence="2">
    <location>
        <position position="592"/>
    </location>
</feature>
<feature type="modified residue" description="Omega-N-methylarginine" evidence="2">
    <location>
        <position position="674"/>
    </location>
</feature>
<feature type="modified residue" description="Phosphoserine" evidence="2">
    <location>
        <position position="684"/>
    </location>
</feature>
<feature type="modified residue" description="Phosphoserine" evidence="3">
    <location>
        <position position="700"/>
    </location>
</feature>
<feature type="splice variant" id="VSP_009321" description="In isoform 3." evidence="11">
    <location>
        <begin position="1"/>
        <end position="56"/>
    </location>
</feature>
<feature type="splice variant" id="VSP_009322" description="In isoform 2 and isoform 3." evidence="11 12">
    <location>
        <begin position="574"/>
        <end position="652"/>
    </location>
</feature>
<feature type="splice variant" id="VSP_009323" description="In isoform 2 and isoform 3." evidence="11 12">
    <location>
        <begin position="829"/>
        <end position="830"/>
    </location>
</feature>
<feature type="sequence conflict" description="In Ref. 3; BAC65507." evidence="13" ref="3">
    <original>M</original>
    <variation>I</variation>
    <location>
        <position position="461"/>
    </location>
</feature>
<feature type="sequence conflict" description="In Ref. 2; AAG31805." evidence="13" ref="2">
    <original>G</original>
    <variation>A</variation>
    <location>
        <position position="547"/>
    </location>
</feature>
<feature type="sequence conflict" description="In Ref. 2; AAG31805." evidence="13" ref="2">
    <original>F</original>
    <variation>C</variation>
    <location>
        <position position="553"/>
    </location>
</feature>
<feature type="sequence conflict" description="In Ref. 2; AAG31805." evidence="13" ref="2">
    <original>LG</original>
    <variation>VR</variation>
    <location>
        <begin position="559"/>
        <end position="560"/>
    </location>
</feature>
<feature type="sequence conflict" description="In Ref. 2; AAG31805." evidence="13" ref="2">
    <original>F</original>
    <variation>C</variation>
    <location>
        <position position="570"/>
    </location>
</feature>
<feature type="sequence conflict" description="In Ref. 2; AAG31805." evidence="13" ref="2">
    <original>S</original>
    <variation>A</variation>
    <location>
        <position position="592"/>
    </location>
</feature>
<feature type="sequence conflict" description="In Ref. 2; AAG31805." evidence="13" ref="2">
    <original>S</original>
    <variation>G</variation>
    <location>
        <position position="628"/>
    </location>
</feature>
<feature type="helix" evidence="17">
    <location>
        <begin position="709"/>
        <end position="715"/>
    </location>
</feature>
<feature type="helix" evidence="17">
    <location>
        <begin position="724"/>
        <end position="727"/>
    </location>
</feature>
<feature type="turn" evidence="18">
    <location>
        <begin position="728"/>
        <end position="730"/>
    </location>
</feature>
<feature type="helix" evidence="17">
    <location>
        <begin position="731"/>
        <end position="735"/>
    </location>
</feature>
<feature type="helix" evidence="17">
    <location>
        <begin position="738"/>
        <end position="748"/>
    </location>
</feature>
<feature type="helix" evidence="17">
    <location>
        <begin position="753"/>
        <end position="763"/>
    </location>
</feature>
<feature type="helix" evidence="17">
    <location>
        <begin position="764"/>
        <end position="766"/>
    </location>
</feature>
<feature type="helix" evidence="17">
    <location>
        <begin position="767"/>
        <end position="771"/>
    </location>
</feature>
<feature type="helix" evidence="17">
    <location>
        <begin position="776"/>
        <end position="786"/>
    </location>
</feature>
<feature type="helix" evidence="17">
    <location>
        <begin position="789"/>
        <end position="799"/>
    </location>
</feature>
<feature type="helix" evidence="17">
    <location>
        <begin position="803"/>
        <end position="807"/>
    </location>
</feature>
<feature type="helix" evidence="17">
    <location>
        <begin position="812"/>
        <end position="822"/>
    </location>
</feature>
<feature type="helix" evidence="17">
    <location>
        <begin position="825"/>
        <end position="828"/>
    </location>
</feature>
<feature type="helix" evidence="17">
    <location>
        <begin position="831"/>
        <end position="834"/>
    </location>
</feature>
<feature type="helix" evidence="17">
    <location>
        <begin position="835"/>
        <end position="837"/>
    </location>
</feature>
<feature type="helix" evidence="17">
    <location>
        <begin position="841"/>
        <end position="846"/>
    </location>
</feature>
<feature type="helix" evidence="17">
    <location>
        <begin position="850"/>
        <end position="860"/>
    </location>
</feature>
<feature type="helix" evidence="17">
    <location>
        <begin position="863"/>
        <end position="865"/>
    </location>
</feature>
<feature type="helix" evidence="17">
    <location>
        <begin position="867"/>
        <end position="872"/>
    </location>
</feature>
<feature type="turn" evidence="17">
    <location>
        <begin position="873"/>
        <end position="876"/>
    </location>
</feature>
<feature type="helix" evidence="17">
    <location>
        <begin position="877"/>
        <end position="881"/>
    </location>
</feature>
<feature type="helix" evidence="17">
    <location>
        <begin position="886"/>
        <end position="896"/>
    </location>
</feature>
<feature type="helix" evidence="17">
    <location>
        <begin position="899"/>
        <end position="910"/>
    </location>
</feature>
<feature type="helix" evidence="17">
    <location>
        <begin position="913"/>
        <end position="917"/>
    </location>
</feature>
<feature type="helix" evidence="17">
    <location>
        <begin position="922"/>
        <end position="932"/>
    </location>
</feature>
<feature type="helix" evidence="17">
    <location>
        <begin position="935"/>
        <end position="943"/>
    </location>
</feature>
<feature type="turn" evidence="17">
    <location>
        <begin position="944"/>
        <end position="947"/>
    </location>
</feature>
<feature type="helix" evidence="17">
    <location>
        <begin position="949"/>
        <end position="953"/>
    </location>
</feature>
<feature type="helix" evidence="17">
    <location>
        <begin position="958"/>
        <end position="968"/>
    </location>
</feature>
<feature type="helix" evidence="17">
    <location>
        <begin position="971"/>
        <end position="982"/>
    </location>
</feature>
<feature type="helix" evidence="17">
    <location>
        <begin position="991"/>
        <end position="997"/>
    </location>
</feature>
<feature type="helix" evidence="17">
    <location>
        <begin position="1001"/>
        <end position="1011"/>
    </location>
</feature>
<feature type="helix" evidence="17">
    <location>
        <begin position="1014"/>
        <end position="1024"/>
    </location>
</feature>
<feature type="helix" evidence="17">
    <location>
        <begin position="1025"/>
        <end position="1027"/>
    </location>
</feature>
<feature type="helix" evidence="17">
    <location>
        <begin position="1028"/>
        <end position="1031"/>
    </location>
</feature>
<feature type="turn" evidence="17">
    <location>
        <begin position="1035"/>
        <end position="1037"/>
    </location>
</feature>
<feature type="helix" evidence="17">
    <location>
        <begin position="1038"/>
        <end position="1047"/>
    </location>
</feature>
<protein>
    <recommendedName>
        <fullName>Pumilio homolog 2</fullName>
    </recommendedName>
</protein>
<dbReference type="EMBL" id="AY027917">
    <property type="protein sequence ID" value="AAK21966.1"/>
    <property type="molecule type" value="mRNA"/>
</dbReference>
<dbReference type="EMBL" id="AF315590">
    <property type="protein sequence ID" value="AAG31805.1"/>
    <property type="molecule type" value="mRNA"/>
</dbReference>
<dbReference type="EMBL" id="AK122225">
    <property type="protein sequence ID" value="BAC65507.1"/>
    <property type="status" value="ALT_INIT"/>
    <property type="molecule type" value="mRNA"/>
</dbReference>
<dbReference type="EMBL" id="BC013765">
    <property type="protein sequence ID" value="AAH13765.1"/>
    <property type="molecule type" value="mRNA"/>
</dbReference>
<dbReference type="EMBL" id="BC041773">
    <property type="protein sequence ID" value="AAH41773.1"/>
    <property type="molecule type" value="mRNA"/>
</dbReference>
<dbReference type="CCDS" id="CCDS25802.1">
    <molecule id="Q80U58-1"/>
</dbReference>
<dbReference type="CCDS" id="CCDS49026.1">
    <molecule id="Q80U58-2"/>
</dbReference>
<dbReference type="RefSeq" id="NP_001153691.1">
    <molecule id="Q80U58-1"/>
    <property type="nucleotide sequence ID" value="NM_001160219.1"/>
</dbReference>
<dbReference type="RefSeq" id="NP_001153694.1">
    <molecule id="Q80U58-2"/>
    <property type="nucleotide sequence ID" value="NM_001160222.1"/>
</dbReference>
<dbReference type="RefSeq" id="NP_109648.2">
    <molecule id="Q80U58-1"/>
    <property type="nucleotide sequence ID" value="NM_030723.2"/>
</dbReference>
<dbReference type="RefSeq" id="XP_006515340.1">
    <molecule id="Q80U58-1"/>
    <property type="nucleotide sequence ID" value="XM_006515277.2"/>
</dbReference>
<dbReference type="RefSeq" id="XP_006515341.1">
    <molecule id="Q80U58-1"/>
    <property type="nucleotide sequence ID" value="XM_006515278.5"/>
</dbReference>
<dbReference type="RefSeq" id="XP_006515342.1">
    <molecule id="Q80U58-1"/>
    <property type="nucleotide sequence ID" value="XM_006515279.4"/>
</dbReference>
<dbReference type="RefSeq" id="XP_006515348.1">
    <molecule id="Q80U58-2"/>
    <property type="nucleotide sequence ID" value="XM_006515285.4"/>
</dbReference>
<dbReference type="RefSeq" id="XP_030102853.1">
    <molecule id="Q80U58-1"/>
    <property type="nucleotide sequence ID" value="XM_030246993.2"/>
</dbReference>
<dbReference type="RefSeq" id="XP_030102856.1">
    <molecule id="Q80U58-2"/>
    <property type="nucleotide sequence ID" value="XM_030246996.1"/>
</dbReference>
<dbReference type="RefSeq" id="XP_030102860.1">
    <molecule id="Q80U58-3"/>
    <property type="nucleotide sequence ID" value="XM_030247000.2"/>
</dbReference>
<dbReference type="PDB" id="3GVO">
    <property type="method" value="X-ray"/>
    <property type="resolution" value="1.60 A"/>
    <property type="chains" value="A=706-1056"/>
</dbReference>
<dbReference type="PDB" id="3GVT">
    <property type="method" value="X-ray"/>
    <property type="resolution" value="2.80 A"/>
    <property type="chains" value="A/B=706-1056"/>
</dbReference>
<dbReference type="PDBsum" id="3GVO"/>
<dbReference type="PDBsum" id="3GVT"/>
<dbReference type="SMR" id="Q80U58"/>
<dbReference type="BioGRID" id="219850">
    <property type="interactions" value="13"/>
</dbReference>
<dbReference type="FunCoup" id="Q80U58">
    <property type="interactions" value="3770"/>
</dbReference>
<dbReference type="IntAct" id="Q80U58">
    <property type="interactions" value="4"/>
</dbReference>
<dbReference type="MINT" id="Q80U58"/>
<dbReference type="STRING" id="10090.ENSMUSP00000128292"/>
<dbReference type="GlyGen" id="Q80U58">
    <property type="glycosylation" value="3 sites, 1 O-linked glycan (3 sites)"/>
</dbReference>
<dbReference type="iPTMnet" id="Q80U58"/>
<dbReference type="PhosphoSitePlus" id="Q80U58"/>
<dbReference type="jPOST" id="Q80U58"/>
<dbReference type="PaxDb" id="10090-ENSMUSP00000131074"/>
<dbReference type="PeptideAtlas" id="Q80U58"/>
<dbReference type="ProteomicsDB" id="301830">
    <molecule id="Q80U58-1"/>
</dbReference>
<dbReference type="ProteomicsDB" id="301831">
    <molecule id="Q80U58-2"/>
</dbReference>
<dbReference type="ProteomicsDB" id="301832">
    <molecule id="Q80U58-3"/>
</dbReference>
<dbReference type="Pumba" id="Q80U58"/>
<dbReference type="Antibodypedia" id="12999">
    <property type="antibodies" value="435 antibodies from 37 providers"/>
</dbReference>
<dbReference type="DNASU" id="80913"/>
<dbReference type="Ensembl" id="ENSMUST00000163569.8">
    <molecule id="Q80U58-1"/>
    <property type="protein sequence ID" value="ENSMUSP00000131074.2"/>
    <property type="gene ID" value="ENSMUSG00000020594.15"/>
</dbReference>
<dbReference type="Ensembl" id="ENSMUST00000168361.8">
    <molecule id="Q80U58-1"/>
    <property type="protein sequence ID" value="ENSMUSP00000128292.2"/>
    <property type="gene ID" value="ENSMUSG00000020594.15"/>
</dbReference>
<dbReference type="Ensembl" id="ENSMUST00000169089.8">
    <molecule id="Q80U58-2"/>
    <property type="protein sequence ID" value="ENSMUSP00000132122.2"/>
    <property type="gene ID" value="ENSMUSG00000020594.15"/>
</dbReference>
<dbReference type="Ensembl" id="ENSMUST00000178015.8">
    <molecule id="Q80U58-2"/>
    <property type="protein sequence ID" value="ENSMUSP00000137020.2"/>
    <property type="gene ID" value="ENSMUSG00000020594.15"/>
</dbReference>
<dbReference type="GeneID" id="80913"/>
<dbReference type="KEGG" id="mmu:80913"/>
<dbReference type="UCSC" id="uc007mzw.2">
    <molecule id="Q80U58-3"/>
    <property type="organism name" value="mouse"/>
</dbReference>
<dbReference type="UCSC" id="uc007mzy.2">
    <molecule id="Q80U58-1"/>
    <property type="organism name" value="mouse"/>
</dbReference>
<dbReference type="UCSC" id="uc007naa.2">
    <molecule id="Q80U58-2"/>
    <property type="organism name" value="mouse"/>
</dbReference>
<dbReference type="AGR" id="MGI:1931751"/>
<dbReference type="CTD" id="23369"/>
<dbReference type="MGI" id="MGI:1931751">
    <property type="gene designation" value="Pum2"/>
</dbReference>
<dbReference type="VEuPathDB" id="HostDB:ENSMUSG00000020594"/>
<dbReference type="eggNOG" id="KOG1488">
    <property type="taxonomic scope" value="Eukaryota"/>
</dbReference>
<dbReference type="GeneTree" id="ENSGT00940000157575"/>
<dbReference type="InParanoid" id="Q80U58"/>
<dbReference type="OMA" id="RGMMHAN"/>
<dbReference type="OrthoDB" id="668540at2759"/>
<dbReference type="PhylomeDB" id="Q80U58"/>
<dbReference type="TreeFam" id="TF318160"/>
<dbReference type="BioGRID-ORCS" id="80913">
    <property type="hits" value="2 hits in 77 CRISPR screens"/>
</dbReference>
<dbReference type="ChiTaRS" id="Pum2">
    <property type="organism name" value="mouse"/>
</dbReference>
<dbReference type="EvolutionaryTrace" id="Q80U58"/>
<dbReference type="PRO" id="PR:Q80U58"/>
<dbReference type="Proteomes" id="UP000000589">
    <property type="component" value="Chromosome 12"/>
</dbReference>
<dbReference type="RNAct" id="Q80U58">
    <property type="molecule type" value="protein"/>
</dbReference>
<dbReference type="Bgee" id="ENSMUSG00000020594">
    <property type="expression patterns" value="Expressed in embryonic brain and 264 other cell types or tissues"/>
</dbReference>
<dbReference type="ExpressionAtlas" id="Q80U58">
    <property type="expression patterns" value="baseline and differential"/>
</dbReference>
<dbReference type="GO" id="GO:0010494">
    <property type="term" value="C:cytoplasmic stress granule"/>
    <property type="evidence" value="ECO:0000314"/>
    <property type="project" value="UniProtKB"/>
</dbReference>
<dbReference type="GO" id="GO:0005829">
    <property type="term" value="C:cytosol"/>
    <property type="evidence" value="ECO:0007669"/>
    <property type="project" value="Ensembl"/>
</dbReference>
<dbReference type="GO" id="GO:0098978">
    <property type="term" value="C:glutamatergic synapse"/>
    <property type="evidence" value="ECO:0007669"/>
    <property type="project" value="Ensembl"/>
</dbReference>
<dbReference type="GO" id="GO:0043025">
    <property type="term" value="C:neuronal cell body"/>
    <property type="evidence" value="ECO:0007669"/>
    <property type="project" value="Ensembl"/>
</dbReference>
<dbReference type="GO" id="GO:0031965">
    <property type="term" value="C:nuclear membrane"/>
    <property type="evidence" value="ECO:0007669"/>
    <property type="project" value="Ensembl"/>
</dbReference>
<dbReference type="GO" id="GO:0048471">
    <property type="term" value="C:perinuclear region of cytoplasm"/>
    <property type="evidence" value="ECO:0000250"/>
    <property type="project" value="UniProtKB"/>
</dbReference>
<dbReference type="GO" id="GO:0098794">
    <property type="term" value="C:postsynapse"/>
    <property type="evidence" value="ECO:0007669"/>
    <property type="project" value="Ensembl"/>
</dbReference>
<dbReference type="GO" id="GO:0106222">
    <property type="term" value="F:lncRNA binding"/>
    <property type="evidence" value="ECO:0000314"/>
    <property type="project" value="MGI"/>
</dbReference>
<dbReference type="GO" id="GO:0035198">
    <property type="term" value="F:miRNA binding"/>
    <property type="evidence" value="ECO:0007669"/>
    <property type="project" value="Ensembl"/>
</dbReference>
<dbReference type="GO" id="GO:0003730">
    <property type="term" value="F:mRNA 3'-UTR binding"/>
    <property type="evidence" value="ECO:0007669"/>
    <property type="project" value="Ensembl"/>
</dbReference>
<dbReference type="GO" id="GO:0062104">
    <property type="term" value="F:pumilio-response element binding"/>
    <property type="evidence" value="ECO:0000314"/>
    <property type="project" value="MGI"/>
</dbReference>
<dbReference type="GO" id="GO:0003723">
    <property type="term" value="F:RNA binding"/>
    <property type="evidence" value="ECO:0000314"/>
    <property type="project" value="MGI"/>
</dbReference>
<dbReference type="GO" id="GO:0060612">
    <property type="term" value="P:adipose tissue development"/>
    <property type="evidence" value="ECO:0000314"/>
    <property type="project" value="MGI"/>
</dbReference>
<dbReference type="GO" id="GO:0051276">
    <property type="term" value="P:chromosome organization"/>
    <property type="evidence" value="ECO:0000314"/>
    <property type="project" value="MGI"/>
</dbReference>
<dbReference type="GO" id="GO:0001942">
    <property type="term" value="P:hair follicle development"/>
    <property type="evidence" value="ECO:0000314"/>
    <property type="project" value="MGI"/>
</dbReference>
<dbReference type="GO" id="GO:0035196">
    <property type="term" value="P:miRNA processing"/>
    <property type="evidence" value="ECO:0000250"/>
    <property type="project" value="UniProtKB"/>
</dbReference>
<dbReference type="GO" id="GO:0007005">
    <property type="term" value="P:mitochondrion organization"/>
    <property type="evidence" value="ECO:0000314"/>
    <property type="project" value="MGI"/>
</dbReference>
<dbReference type="GO" id="GO:2000637">
    <property type="term" value="P:positive regulation of miRNA-mediated gene silencing"/>
    <property type="evidence" value="ECO:0007669"/>
    <property type="project" value="Ensembl"/>
</dbReference>
<dbReference type="GO" id="GO:1900246">
    <property type="term" value="P:positive regulation of RIG-I signaling pathway"/>
    <property type="evidence" value="ECO:0007669"/>
    <property type="project" value="Ensembl"/>
</dbReference>
<dbReference type="GO" id="GO:0048687">
    <property type="term" value="P:positive regulation of sprouting of injured axon"/>
    <property type="evidence" value="ECO:0007669"/>
    <property type="project" value="Ensembl"/>
</dbReference>
<dbReference type="GO" id="GO:0010608">
    <property type="term" value="P:post-transcriptional regulation of gene expression"/>
    <property type="evidence" value="ECO:0000315"/>
    <property type="project" value="MGI"/>
</dbReference>
<dbReference type="GO" id="GO:0051983">
    <property type="term" value="P:regulation of chromosome segregation"/>
    <property type="evidence" value="ECO:0000250"/>
    <property type="project" value="UniProtKB"/>
</dbReference>
<dbReference type="GO" id="GO:1904580">
    <property type="term" value="P:regulation of intracellular mRNA localization"/>
    <property type="evidence" value="ECO:0007669"/>
    <property type="project" value="Ensembl"/>
</dbReference>
<dbReference type="GO" id="GO:0043488">
    <property type="term" value="P:regulation of mRNA stability"/>
    <property type="evidence" value="ECO:0000250"/>
    <property type="project" value="UniProtKB"/>
</dbReference>
<dbReference type="GO" id="GO:0150052">
    <property type="term" value="P:regulation of postsynapse assembly"/>
    <property type="evidence" value="ECO:0007669"/>
    <property type="project" value="Ensembl"/>
</dbReference>
<dbReference type="GO" id="GO:0006417">
    <property type="term" value="P:regulation of translation"/>
    <property type="evidence" value="ECO:0007669"/>
    <property type="project" value="UniProtKB-KW"/>
</dbReference>
<dbReference type="GO" id="GO:0022904">
    <property type="term" value="P:respiratory electron transport chain"/>
    <property type="evidence" value="ECO:0000314"/>
    <property type="project" value="MGI"/>
</dbReference>
<dbReference type="GO" id="GO:0001501">
    <property type="term" value="P:skeletal system development"/>
    <property type="evidence" value="ECO:0000314"/>
    <property type="project" value="MGI"/>
</dbReference>
<dbReference type="GO" id="GO:0034063">
    <property type="term" value="P:stress granule assembly"/>
    <property type="evidence" value="ECO:0000314"/>
    <property type="project" value="MGI"/>
</dbReference>
<dbReference type="CDD" id="cd07920">
    <property type="entry name" value="Pumilio"/>
    <property type="match status" value="1"/>
</dbReference>
<dbReference type="FunFam" id="1.25.10.10:FF:000004">
    <property type="entry name" value="Pumilio homolog 1 isoform 2"/>
    <property type="match status" value="1"/>
</dbReference>
<dbReference type="Gene3D" id="1.25.10.10">
    <property type="entry name" value="Leucine-rich Repeat Variant"/>
    <property type="match status" value="1"/>
</dbReference>
<dbReference type="InterPro" id="IPR011989">
    <property type="entry name" value="ARM-like"/>
</dbReference>
<dbReference type="InterPro" id="IPR016024">
    <property type="entry name" value="ARM-type_fold"/>
</dbReference>
<dbReference type="InterPro" id="IPR033133">
    <property type="entry name" value="PUM-HD"/>
</dbReference>
<dbReference type="InterPro" id="IPR033712">
    <property type="entry name" value="Pumilio_RNA-bd"/>
</dbReference>
<dbReference type="InterPro" id="IPR001313">
    <property type="entry name" value="Pumilio_RNA-bd_rpt"/>
</dbReference>
<dbReference type="PANTHER" id="PTHR12537:SF52">
    <property type="entry name" value="PUMILIO HOMOLOG 2"/>
    <property type="match status" value="1"/>
</dbReference>
<dbReference type="PANTHER" id="PTHR12537">
    <property type="entry name" value="RNA BINDING PROTEIN PUMILIO-RELATED"/>
    <property type="match status" value="1"/>
</dbReference>
<dbReference type="Pfam" id="PF00806">
    <property type="entry name" value="PUF"/>
    <property type="match status" value="8"/>
</dbReference>
<dbReference type="SMART" id="SM00025">
    <property type="entry name" value="Pumilio"/>
    <property type="match status" value="8"/>
</dbReference>
<dbReference type="SUPFAM" id="SSF48371">
    <property type="entry name" value="ARM repeat"/>
    <property type="match status" value="1"/>
</dbReference>
<dbReference type="PROSITE" id="PS50302">
    <property type="entry name" value="PUM"/>
    <property type="match status" value="8"/>
</dbReference>
<dbReference type="PROSITE" id="PS50303">
    <property type="entry name" value="PUM_HD"/>
    <property type="match status" value="1"/>
</dbReference>